<evidence type="ECO:0000255" key="1">
    <source>
        <dbReference type="HAMAP-Rule" id="MF_00367"/>
    </source>
</evidence>
<evidence type="ECO:0000255" key="2">
    <source>
        <dbReference type="PROSITE-ProRule" id="PRU01050"/>
    </source>
</evidence>
<accession>B1ILK9</accession>
<feature type="chain" id="PRO_1000121312" description="GTPase Era">
    <location>
        <begin position="1"/>
        <end position="296"/>
    </location>
</feature>
<feature type="domain" description="Era-type G" evidence="2">
    <location>
        <begin position="3"/>
        <end position="170"/>
    </location>
</feature>
<feature type="domain" description="KH type-2" evidence="1">
    <location>
        <begin position="201"/>
        <end position="278"/>
    </location>
</feature>
<feature type="region of interest" description="G1" evidence="2">
    <location>
        <begin position="11"/>
        <end position="18"/>
    </location>
</feature>
<feature type="region of interest" description="G2" evidence="2">
    <location>
        <begin position="37"/>
        <end position="41"/>
    </location>
</feature>
<feature type="region of interest" description="G3" evidence="2">
    <location>
        <begin position="58"/>
        <end position="61"/>
    </location>
</feature>
<feature type="region of interest" description="G4" evidence="2">
    <location>
        <begin position="120"/>
        <end position="123"/>
    </location>
</feature>
<feature type="region of interest" description="G5" evidence="2">
    <location>
        <begin position="149"/>
        <end position="151"/>
    </location>
</feature>
<feature type="binding site" evidence="1">
    <location>
        <begin position="11"/>
        <end position="18"/>
    </location>
    <ligand>
        <name>GTP</name>
        <dbReference type="ChEBI" id="CHEBI:37565"/>
    </ligand>
</feature>
<feature type="binding site" evidence="1">
    <location>
        <begin position="58"/>
        <end position="62"/>
    </location>
    <ligand>
        <name>GTP</name>
        <dbReference type="ChEBI" id="CHEBI:37565"/>
    </ligand>
</feature>
<feature type="binding site" evidence="1">
    <location>
        <begin position="120"/>
        <end position="123"/>
    </location>
    <ligand>
        <name>GTP</name>
        <dbReference type="ChEBI" id="CHEBI:37565"/>
    </ligand>
</feature>
<organism>
    <name type="scientific">Clostridium botulinum (strain Okra / Type B1)</name>
    <dbReference type="NCBI Taxonomy" id="498213"/>
    <lineage>
        <taxon>Bacteria</taxon>
        <taxon>Bacillati</taxon>
        <taxon>Bacillota</taxon>
        <taxon>Clostridia</taxon>
        <taxon>Eubacteriales</taxon>
        <taxon>Clostridiaceae</taxon>
        <taxon>Clostridium</taxon>
    </lineage>
</organism>
<gene>
    <name evidence="1" type="primary">era</name>
    <name type="ordered locus">CLD_1600</name>
</gene>
<proteinExistence type="inferred from homology"/>
<reference key="1">
    <citation type="journal article" date="2007" name="PLoS ONE">
        <title>Analysis of the neurotoxin complex genes in Clostridium botulinum A1-A4 and B1 strains: BoNT/A3, /Ba4 and /B1 clusters are located within plasmids.</title>
        <authorList>
            <person name="Smith T.J."/>
            <person name="Hill K.K."/>
            <person name="Foley B.T."/>
            <person name="Detter J.C."/>
            <person name="Munk A.C."/>
            <person name="Bruce D.C."/>
            <person name="Doggett N.A."/>
            <person name="Smith L.A."/>
            <person name="Marks J.D."/>
            <person name="Xie G."/>
            <person name="Brettin T.S."/>
        </authorList>
    </citation>
    <scope>NUCLEOTIDE SEQUENCE [LARGE SCALE GENOMIC DNA]</scope>
    <source>
        <strain>Okra / Type B1</strain>
    </source>
</reference>
<protein>
    <recommendedName>
        <fullName evidence="1">GTPase Era</fullName>
    </recommendedName>
</protein>
<sequence>MFKSGFVTIVGRPNVGKSTLLNAIMKEKLSIVSCRPQTTRNNIQTILTEDNYQLVFVDTPGIHKPKHKLGEYMVKSASDAMKDVDLVLFLINPDEKPGRGDLFIIEQLKEVKVPVFLVLNKIDENPQEKVAETLKTYSELMEFEEIIPISALKGKNIDLLKELMFKYIPEGPQYYPEDMIIDQNERFIVAEIVREKALRLLSEEVPHGIAVEILQMKKNEKGTYHIEGNILCEKNSHKPIIIGKGGSKLKKISQYARQDIEAFLQSKVYIRLWVKVKEEWRDNQSLLKELGYKKMK</sequence>
<dbReference type="EMBL" id="CP000939">
    <property type="protein sequence ID" value="ACA43617.1"/>
    <property type="molecule type" value="Genomic_DNA"/>
</dbReference>
<dbReference type="RefSeq" id="WP_004451892.1">
    <property type="nucleotide sequence ID" value="NC_010516.1"/>
</dbReference>
<dbReference type="SMR" id="B1ILK9"/>
<dbReference type="KEGG" id="cbb:CLD_1600"/>
<dbReference type="HOGENOM" id="CLU_038009_1_0_9"/>
<dbReference type="Proteomes" id="UP000008541">
    <property type="component" value="Chromosome"/>
</dbReference>
<dbReference type="GO" id="GO:0005829">
    <property type="term" value="C:cytosol"/>
    <property type="evidence" value="ECO:0007669"/>
    <property type="project" value="TreeGrafter"/>
</dbReference>
<dbReference type="GO" id="GO:0005886">
    <property type="term" value="C:plasma membrane"/>
    <property type="evidence" value="ECO:0007669"/>
    <property type="project" value="UniProtKB-SubCell"/>
</dbReference>
<dbReference type="GO" id="GO:0005525">
    <property type="term" value="F:GTP binding"/>
    <property type="evidence" value="ECO:0007669"/>
    <property type="project" value="UniProtKB-UniRule"/>
</dbReference>
<dbReference type="GO" id="GO:0003924">
    <property type="term" value="F:GTPase activity"/>
    <property type="evidence" value="ECO:0007669"/>
    <property type="project" value="UniProtKB-UniRule"/>
</dbReference>
<dbReference type="GO" id="GO:0043024">
    <property type="term" value="F:ribosomal small subunit binding"/>
    <property type="evidence" value="ECO:0007669"/>
    <property type="project" value="TreeGrafter"/>
</dbReference>
<dbReference type="GO" id="GO:0070181">
    <property type="term" value="F:small ribosomal subunit rRNA binding"/>
    <property type="evidence" value="ECO:0007669"/>
    <property type="project" value="UniProtKB-UniRule"/>
</dbReference>
<dbReference type="GO" id="GO:0000028">
    <property type="term" value="P:ribosomal small subunit assembly"/>
    <property type="evidence" value="ECO:0007669"/>
    <property type="project" value="TreeGrafter"/>
</dbReference>
<dbReference type="CDD" id="cd04163">
    <property type="entry name" value="Era"/>
    <property type="match status" value="1"/>
</dbReference>
<dbReference type="CDD" id="cd22534">
    <property type="entry name" value="KH-II_Era"/>
    <property type="match status" value="1"/>
</dbReference>
<dbReference type="FunFam" id="3.30.300.20:FF:000003">
    <property type="entry name" value="GTPase Era"/>
    <property type="match status" value="1"/>
</dbReference>
<dbReference type="FunFam" id="3.40.50.300:FF:000094">
    <property type="entry name" value="GTPase Era"/>
    <property type="match status" value="1"/>
</dbReference>
<dbReference type="Gene3D" id="3.30.300.20">
    <property type="match status" value="1"/>
</dbReference>
<dbReference type="Gene3D" id="3.40.50.300">
    <property type="entry name" value="P-loop containing nucleotide triphosphate hydrolases"/>
    <property type="match status" value="1"/>
</dbReference>
<dbReference type="HAMAP" id="MF_00367">
    <property type="entry name" value="GTPase_Era"/>
    <property type="match status" value="1"/>
</dbReference>
<dbReference type="InterPro" id="IPR030388">
    <property type="entry name" value="G_ERA_dom"/>
</dbReference>
<dbReference type="InterPro" id="IPR006073">
    <property type="entry name" value="GTP-bd"/>
</dbReference>
<dbReference type="InterPro" id="IPR005662">
    <property type="entry name" value="GTPase_Era-like"/>
</dbReference>
<dbReference type="InterPro" id="IPR015946">
    <property type="entry name" value="KH_dom-like_a/b"/>
</dbReference>
<dbReference type="InterPro" id="IPR004044">
    <property type="entry name" value="KH_dom_type_2"/>
</dbReference>
<dbReference type="InterPro" id="IPR009019">
    <property type="entry name" value="KH_sf_prok-type"/>
</dbReference>
<dbReference type="InterPro" id="IPR027417">
    <property type="entry name" value="P-loop_NTPase"/>
</dbReference>
<dbReference type="InterPro" id="IPR005225">
    <property type="entry name" value="Small_GTP-bd"/>
</dbReference>
<dbReference type="NCBIfam" id="TIGR00436">
    <property type="entry name" value="era"/>
    <property type="match status" value="1"/>
</dbReference>
<dbReference type="NCBIfam" id="NF000908">
    <property type="entry name" value="PRK00089.1"/>
    <property type="match status" value="1"/>
</dbReference>
<dbReference type="NCBIfam" id="TIGR00231">
    <property type="entry name" value="small_GTP"/>
    <property type="match status" value="1"/>
</dbReference>
<dbReference type="PANTHER" id="PTHR42698">
    <property type="entry name" value="GTPASE ERA"/>
    <property type="match status" value="1"/>
</dbReference>
<dbReference type="PANTHER" id="PTHR42698:SF1">
    <property type="entry name" value="GTPASE ERA, MITOCHONDRIAL"/>
    <property type="match status" value="1"/>
</dbReference>
<dbReference type="Pfam" id="PF07650">
    <property type="entry name" value="KH_2"/>
    <property type="match status" value="1"/>
</dbReference>
<dbReference type="Pfam" id="PF01926">
    <property type="entry name" value="MMR_HSR1"/>
    <property type="match status" value="1"/>
</dbReference>
<dbReference type="SUPFAM" id="SSF52540">
    <property type="entry name" value="P-loop containing nucleoside triphosphate hydrolases"/>
    <property type="match status" value="1"/>
</dbReference>
<dbReference type="SUPFAM" id="SSF54814">
    <property type="entry name" value="Prokaryotic type KH domain (KH-domain type II)"/>
    <property type="match status" value="1"/>
</dbReference>
<dbReference type="PROSITE" id="PS51713">
    <property type="entry name" value="G_ERA"/>
    <property type="match status" value="1"/>
</dbReference>
<dbReference type="PROSITE" id="PS50823">
    <property type="entry name" value="KH_TYPE_2"/>
    <property type="match status" value="1"/>
</dbReference>
<comment type="function">
    <text evidence="1">An essential GTPase that binds both GDP and GTP, with rapid nucleotide exchange. Plays a role in 16S rRNA processing and 30S ribosomal subunit biogenesis and possibly also in cell cycle regulation and energy metabolism.</text>
</comment>
<comment type="subunit">
    <text evidence="1">Monomer.</text>
</comment>
<comment type="subcellular location">
    <subcellularLocation>
        <location>Cytoplasm</location>
    </subcellularLocation>
    <subcellularLocation>
        <location evidence="1">Cell membrane</location>
        <topology evidence="1">Peripheral membrane protein</topology>
    </subcellularLocation>
</comment>
<comment type="similarity">
    <text evidence="1 2">Belongs to the TRAFAC class TrmE-Era-EngA-EngB-Septin-like GTPase superfamily. Era GTPase family.</text>
</comment>
<keyword id="KW-1003">Cell membrane</keyword>
<keyword id="KW-0963">Cytoplasm</keyword>
<keyword id="KW-0342">GTP-binding</keyword>
<keyword id="KW-0472">Membrane</keyword>
<keyword id="KW-0547">Nucleotide-binding</keyword>
<keyword id="KW-0690">Ribosome biogenesis</keyword>
<keyword id="KW-0694">RNA-binding</keyword>
<keyword id="KW-0699">rRNA-binding</keyword>
<name>ERA_CLOBK</name>